<reference key="1">
    <citation type="journal article" date="1996" name="Science">
        <title>Complete genome sequence of the methanogenic archaeon, Methanococcus jannaschii.</title>
        <authorList>
            <person name="Bult C.J."/>
            <person name="White O."/>
            <person name="Olsen G.J."/>
            <person name="Zhou L."/>
            <person name="Fleischmann R.D."/>
            <person name="Sutton G.G."/>
            <person name="Blake J.A."/>
            <person name="FitzGerald L.M."/>
            <person name="Clayton R.A."/>
            <person name="Gocayne J.D."/>
            <person name="Kerlavage A.R."/>
            <person name="Dougherty B.A."/>
            <person name="Tomb J.-F."/>
            <person name="Adams M.D."/>
            <person name="Reich C.I."/>
            <person name="Overbeek R."/>
            <person name="Kirkness E.F."/>
            <person name="Weinstock K.G."/>
            <person name="Merrick J.M."/>
            <person name="Glodek A."/>
            <person name="Scott J.L."/>
            <person name="Geoghagen N.S.M."/>
            <person name="Weidman J.F."/>
            <person name="Fuhrmann J.L."/>
            <person name="Nguyen D."/>
            <person name="Utterback T.R."/>
            <person name="Kelley J.M."/>
            <person name="Peterson J.D."/>
            <person name="Sadow P.W."/>
            <person name="Hanna M.C."/>
            <person name="Cotton M.D."/>
            <person name="Roberts K.M."/>
            <person name="Hurst M.A."/>
            <person name="Kaine B.P."/>
            <person name="Borodovsky M."/>
            <person name="Klenk H.-P."/>
            <person name="Fraser C.M."/>
            <person name="Smith H.O."/>
            <person name="Woese C.R."/>
            <person name="Venter J.C."/>
        </authorList>
    </citation>
    <scope>NUCLEOTIDE SEQUENCE [LARGE SCALE GENOMIC DNA]</scope>
    <source>
        <strain>ATCC 43067 / DSM 2661 / JAL-1 / JCM 10045 / NBRC 100440</strain>
    </source>
</reference>
<feature type="chain" id="PRO_0000107017" description="Uncharacterized protein MJ0758">
    <location>
        <begin position="1"/>
        <end position="159"/>
    </location>
</feature>
<proteinExistence type="predicted"/>
<keyword id="KW-1185">Reference proteome</keyword>
<protein>
    <recommendedName>
        <fullName>Uncharacterized protein MJ0758</fullName>
    </recommendedName>
</protein>
<organism>
    <name type="scientific">Methanocaldococcus jannaschii (strain ATCC 43067 / DSM 2661 / JAL-1 / JCM 10045 / NBRC 100440)</name>
    <name type="common">Methanococcus jannaschii</name>
    <dbReference type="NCBI Taxonomy" id="243232"/>
    <lineage>
        <taxon>Archaea</taxon>
        <taxon>Methanobacteriati</taxon>
        <taxon>Methanobacteriota</taxon>
        <taxon>Methanomada group</taxon>
        <taxon>Methanococci</taxon>
        <taxon>Methanococcales</taxon>
        <taxon>Methanocaldococcaceae</taxon>
        <taxon>Methanocaldococcus</taxon>
    </lineage>
</organism>
<sequence length="159" mass="18245">MVCSRGIFGIDIMNKKGIDSLFVSALYYSINKAIYDVMGDGGKVLGRRASYEMIKLLKDLGFIKENMSNEEIKNLFVNTFGLSEDLNIVEEDKKVIFEVINPTLDLFLKKLMEENLKPYVCPFMYLLSEIYSVSNNCRLMLSDVVPETEEKVKLIFKKV</sequence>
<accession>Q58168</accession>
<name>Y758_METJA</name>
<gene>
    <name type="ordered locus">MJ0758</name>
</gene>
<dbReference type="EMBL" id="L77117">
    <property type="protein sequence ID" value="AAB98758.1"/>
    <property type="molecule type" value="Genomic_DNA"/>
</dbReference>
<dbReference type="PIR" id="F64394">
    <property type="entry name" value="F64394"/>
</dbReference>
<dbReference type="STRING" id="243232.MJ_0758"/>
<dbReference type="PaxDb" id="243232-MJ_0758"/>
<dbReference type="EnsemblBacteria" id="AAB98758">
    <property type="protein sequence ID" value="AAB98758"/>
    <property type="gene ID" value="MJ_0758"/>
</dbReference>
<dbReference type="KEGG" id="mja:MJ_0758"/>
<dbReference type="eggNOG" id="arCOG08262">
    <property type="taxonomic scope" value="Archaea"/>
</dbReference>
<dbReference type="HOGENOM" id="CLU_145180_0_0_2"/>
<dbReference type="InParanoid" id="Q58168"/>
<dbReference type="Proteomes" id="UP000000805">
    <property type="component" value="Chromosome"/>
</dbReference>